<sequence>MASQVQPGQKPKVQPCRYKTGKTLGAGLYSVVKECVHIDTGQYYAAKVINKRLMVGREHMVRNEIAILKQVSTGHQNILTLVDYFETMNNLYLVTDLALGGELFDRICRKGSYYESDAADLVRAILSAVAYLHDHGIVHRDLKPENLLFRTPEDNADLLIADFGLSRIMDEEQLHVLTTTCGTPGYMAPEIFDKSGHGKPVDIWAIGLITYFMLCGYTPFDRETNLEEVQAIATANFSFTPVEYWRGVSQEARDFIKRCLTVNPKKRMTAHQALQHPWINPPYDTTDDLGSGEDLLPNIKKNFNARRTLHKAIDTVRAINKLRENGGLMMDGIMSVDPKPEHVNGSEVVEDRTTPRERENEDAMEIDSRSNARGQTEQQIREQERKVKETVAGLWSRTAPRSER</sequence>
<accession>Q9Y899</accession>
<comment type="function">
    <text evidence="4">Calcium/calmodulin-dependent protein kinase that operates in the calcium-triggered CaMKK-CaMK1 signaling cascade. Required in G1-phase of the cell cycle for proper timing of the initial nuclear division after germination, but not for subsequent mitoses. Required for the normal temporal regulation of nimX activity.</text>
</comment>
<comment type="catalytic activity">
    <reaction evidence="4">
        <text>L-seryl-[protein] + ATP = O-phospho-L-seryl-[protein] + ADP + H(+)</text>
        <dbReference type="Rhea" id="RHEA:17989"/>
        <dbReference type="Rhea" id="RHEA-COMP:9863"/>
        <dbReference type="Rhea" id="RHEA-COMP:11604"/>
        <dbReference type="ChEBI" id="CHEBI:15378"/>
        <dbReference type="ChEBI" id="CHEBI:29999"/>
        <dbReference type="ChEBI" id="CHEBI:30616"/>
        <dbReference type="ChEBI" id="CHEBI:83421"/>
        <dbReference type="ChEBI" id="CHEBI:456216"/>
        <dbReference type="EC" id="2.7.11.17"/>
    </reaction>
</comment>
<comment type="catalytic activity">
    <reaction evidence="4">
        <text>L-threonyl-[protein] + ATP = O-phospho-L-threonyl-[protein] + ADP + H(+)</text>
        <dbReference type="Rhea" id="RHEA:46608"/>
        <dbReference type="Rhea" id="RHEA-COMP:11060"/>
        <dbReference type="Rhea" id="RHEA-COMP:11605"/>
        <dbReference type="ChEBI" id="CHEBI:15378"/>
        <dbReference type="ChEBI" id="CHEBI:30013"/>
        <dbReference type="ChEBI" id="CHEBI:30616"/>
        <dbReference type="ChEBI" id="CHEBI:61977"/>
        <dbReference type="ChEBI" id="CHEBI:456216"/>
        <dbReference type="EC" id="2.7.11.17"/>
    </reaction>
</comment>
<comment type="activity regulation">
    <text evidence="4">Activated by Ca(2+)/calmodulin. Binding of calmodulin results in conformational change that relieves intrasteric autoinhibition and allows phosphorylation of Thr-179 within the activation loop by cmkC.</text>
</comment>
<comment type="domain">
    <text evidence="1">The autoinhibitory domain overlaps with the calmodulin binding region and interacts in the inactive folded state with the catalytic domain as a pseudosubstrate.</text>
</comment>
<comment type="PTM">
    <text evidence="4">Phosphorylated by cmkC on Thr-179.</text>
</comment>
<comment type="disruption phenotype">
    <text evidence="4">Lethal.</text>
</comment>
<comment type="similarity">
    <text evidence="6">Belongs to the protein kinase superfamily. CAMK Ser/Thr protein kinase family. CaMK subfamily.</text>
</comment>
<feature type="chain" id="PRO_0000440633" description="Calcium/calmodulin-dependent protein kinase cmkB">
    <location>
        <begin position="1"/>
        <end position="404"/>
    </location>
</feature>
<feature type="domain" description="Protein kinase" evidence="2">
    <location>
        <begin position="18"/>
        <end position="279"/>
    </location>
</feature>
<feature type="region of interest" description="Autoinhibitory domain" evidence="1">
    <location>
        <begin position="279"/>
        <end position="322"/>
    </location>
</feature>
<feature type="region of interest" description="Calmodulin-binding" evidence="1">
    <location>
        <begin position="301"/>
        <end position="323"/>
    </location>
</feature>
<feature type="region of interest" description="Disordered" evidence="3">
    <location>
        <begin position="336"/>
        <end position="404"/>
    </location>
</feature>
<feature type="compositionally biased region" description="Basic and acidic residues" evidence="3">
    <location>
        <begin position="338"/>
        <end position="370"/>
    </location>
</feature>
<feature type="compositionally biased region" description="Basic and acidic residues" evidence="3">
    <location>
        <begin position="379"/>
        <end position="389"/>
    </location>
</feature>
<feature type="active site" description="Proton acceptor" evidence="2">
    <location>
        <position position="141"/>
    </location>
</feature>
<feature type="binding site" evidence="2">
    <location>
        <begin position="24"/>
        <end position="32"/>
    </location>
    <ligand>
        <name>ATP</name>
        <dbReference type="ChEBI" id="CHEBI:30616"/>
    </ligand>
</feature>
<feature type="binding site" evidence="2">
    <location>
        <position position="47"/>
    </location>
    <ligand>
        <name>ATP</name>
        <dbReference type="ChEBI" id="CHEBI:30616"/>
    </ligand>
</feature>
<feature type="modified residue" description="Phosphothreonine; by cmkC" evidence="7">
    <location>
        <position position="179"/>
    </location>
</feature>
<feature type="mutagenesis site" description="Loss of activation by cmkC." evidence="4">
    <original>T</original>
    <variation>A</variation>
    <location>
        <position position="179"/>
    </location>
</feature>
<organism evidence="8">
    <name type="scientific">Emericella nidulans</name>
    <name type="common">Aspergillus nidulans</name>
    <dbReference type="NCBI Taxonomy" id="162425"/>
    <lineage>
        <taxon>Eukaryota</taxon>
        <taxon>Fungi</taxon>
        <taxon>Dikarya</taxon>
        <taxon>Ascomycota</taxon>
        <taxon>Pezizomycotina</taxon>
        <taxon>Eurotiomycetes</taxon>
        <taxon>Eurotiomycetidae</taxon>
        <taxon>Eurotiales</taxon>
        <taxon>Aspergillaceae</taxon>
        <taxon>Aspergillus</taxon>
        <taxon>Aspergillus subgen. Nidulantes</taxon>
    </lineage>
</organism>
<keyword id="KW-0021">Allosteric enzyme</keyword>
<keyword id="KW-0067">ATP-binding</keyword>
<keyword id="KW-0112">Calmodulin-binding</keyword>
<keyword id="KW-0131">Cell cycle</keyword>
<keyword id="KW-0132">Cell division</keyword>
<keyword id="KW-0418">Kinase</keyword>
<keyword id="KW-0547">Nucleotide-binding</keyword>
<keyword id="KW-0597">Phosphoprotein</keyword>
<keyword id="KW-0723">Serine/threonine-protein kinase</keyword>
<keyword id="KW-0808">Transferase</keyword>
<gene>
    <name evidence="5 8" type="primary">cmkB</name>
</gene>
<proteinExistence type="evidence at protein level"/>
<dbReference type="EC" id="2.7.11.17" evidence="4"/>
<dbReference type="EMBL" id="AF156027">
    <property type="protein sequence ID" value="AAD38850.1"/>
    <property type="molecule type" value="mRNA"/>
</dbReference>
<dbReference type="SMR" id="Q9Y899"/>
<dbReference type="iPTMnet" id="Q9Y899"/>
<dbReference type="GO" id="GO:0005524">
    <property type="term" value="F:ATP binding"/>
    <property type="evidence" value="ECO:0007669"/>
    <property type="project" value="UniProtKB-KW"/>
</dbReference>
<dbReference type="GO" id="GO:0004683">
    <property type="term" value="F:calcium/calmodulin-dependent protein kinase activity"/>
    <property type="evidence" value="ECO:0007669"/>
    <property type="project" value="UniProtKB-EC"/>
</dbReference>
<dbReference type="GO" id="GO:0005516">
    <property type="term" value="F:calmodulin binding"/>
    <property type="evidence" value="ECO:0007669"/>
    <property type="project" value="UniProtKB-KW"/>
</dbReference>
<dbReference type="GO" id="GO:0106310">
    <property type="term" value="F:protein serine kinase activity"/>
    <property type="evidence" value="ECO:0007669"/>
    <property type="project" value="RHEA"/>
</dbReference>
<dbReference type="GO" id="GO:0051301">
    <property type="term" value="P:cell division"/>
    <property type="evidence" value="ECO:0007669"/>
    <property type="project" value="UniProtKB-KW"/>
</dbReference>
<dbReference type="CDD" id="cd05117">
    <property type="entry name" value="STKc_CAMK"/>
    <property type="match status" value="1"/>
</dbReference>
<dbReference type="FunFam" id="1.10.510.10:FF:000257">
    <property type="entry name" value="Calcium/calmodulin-dependent protein kinase type I"/>
    <property type="match status" value="1"/>
</dbReference>
<dbReference type="FunFam" id="3.30.200.20:FF:000153">
    <property type="entry name" value="Calcium/calmodulin-dependent protein kinase type I"/>
    <property type="match status" value="1"/>
</dbReference>
<dbReference type="Gene3D" id="3.30.200.20">
    <property type="entry name" value="Phosphorylase Kinase, domain 1"/>
    <property type="match status" value="1"/>
</dbReference>
<dbReference type="Gene3D" id="1.10.510.10">
    <property type="entry name" value="Transferase(Phosphotransferase) domain 1"/>
    <property type="match status" value="1"/>
</dbReference>
<dbReference type="InterPro" id="IPR011009">
    <property type="entry name" value="Kinase-like_dom_sf"/>
</dbReference>
<dbReference type="InterPro" id="IPR000719">
    <property type="entry name" value="Prot_kinase_dom"/>
</dbReference>
<dbReference type="InterPro" id="IPR017441">
    <property type="entry name" value="Protein_kinase_ATP_BS"/>
</dbReference>
<dbReference type="InterPro" id="IPR008271">
    <property type="entry name" value="Ser/Thr_kinase_AS"/>
</dbReference>
<dbReference type="PANTHER" id="PTHR24347">
    <property type="entry name" value="SERINE/THREONINE-PROTEIN KINASE"/>
    <property type="match status" value="1"/>
</dbReference>
<dbReference type="Pfam" id="PF00069">
    <property type="entry name" value="Pkinase"/>
    <property type="match status" value="1"/>
</dbReference>
<dbReference type="SMART" id="SM00220">
    <property type="entry name" value="S_TKc"/>
    <property type="match status" value="1"/>
</dbReference>
<dbReference type="SUPFAM" id="SSF56112">
    <property type="entry name" value="Protein kinase-like (PK-like)"/>
    <property type="match status" value="1"/>
</dbReference>
<dbReference type="PROSITE" id="PS00107">
    <property type="entry name" value="PROTEIN_KINASE_ATP"/>
    <property type="match status" value="1"/>
</dbReference>
<dbReference type="PROSITE" id="PS50011">
    <property type="entry name" value="PROTEIN_KINASE_DOM"/>
    <property type="match status" value="1"/>
</dbReference>
<dbReference type="PROSITE" id="PS00108">
    <property type="entry name" value="PROTEIN_KINASE_ST"/>
    <property type="match status" value="1"/>
</dbReference>
<evidence type="ECO:0000250" key="1">
    <source>
        <dbReference type="UniProtKB" id="Q63450"/>
    </source>
</evidence>
<evidence type="ECO:0000255" key="2">
    <source>
        <dbReference type="PROSITE-ProRule" id="PRU00159"/>
    </source>
</evidence>
<evidence type="ECO:0000256" key="3">
    <source>
        <dbReference type="SAM" id="MobiDB-lite"/>
    </source>
</evidence>
<evidence type="ECO:0000269" key="4">
    <source>
    </source>
</evidence>
<evidence type="ECO:0000303" key="5">
    <source>
    </source>
</evidence>
<evidence type="ECO:0000305" key="6"/>
<evidence type="ECO:0000305" key="7">
    <source>
    </source>
</evidence>
<evidence type="ECO:0000312" key="8">
    <source>
        <dbReference type="EMBL" id="AAD38850.1"/>
    </source>
</evidence>
<name>KCC1B_EMEND</name>
<reference evidence="8" key="1">
    <citation type="journal article" date="2000" name="J. Biol. Chem.">
        <title>Identification and characterization of two Ca2+/CaM-dependent protein kinases required for normal nuclear division in Aspergillus nidulans.</title>
        <authorList>
            <person name="Joseph J.D."/>
            <person name="Means A.R."/>
        </authorList>
    </citation>
    <scope>NUCLEOTIDE SEQUENCE [MRNA]</scope>
    <scope>FUNCTION</scope>
    <scope>CATALYTIC ACTIVITY</scope>
    <scope>ACTIVITY REGULATION</scope>
    <scope>DISRUPTION PHENOTYPE</scope>
    <scope>MUTAGENESIS OF THR-179</scope>
    <scope>PHOSPHORYLATION AT THR-179</scope>
    <source>
        <strain evidence="5">GR5</strain>
    </source>
</reference>
<protein>
    <recommendedName>
        <fullName evidence="5">Calcium/calmodulin-dependent protein kinase cmkB</fullName>
        <shortName evidence="5">CaMK B</shortName>
        <ecNumber evidence="4">2.7.11.17</ecNumber>
    </recommendedName>
    <alternativeName>
        <fullName evidence="5">CaMKI/IV homolog</fullName>
    </alternativeName>
</protein>